<gene>
    <name evidence="1" type="primary">phnN</name>
    <name type="synonym">gmk</name>
    <name type="ordered locus">blr1228</name>
</gene>
<evidence type="ECO:0000255" key="1">
    <source>
        <dbReference type="HAMAP-Rule" id="MF_00836"/>
    </source>
</evidence>
<name>PHNN_BRADU</name>
<comment type="function">
    <text evidence="1">Catalyzes the phosphorylation of ribose 1,5-bisphosphate to 5-phospho-D-ribosyl alpha-1-diphosphate (PRPP).</text>
</comment>
<comment type="catalytic activity">
    <reaction evidence="1">
        <text>alpha-D-ribose 1,5-bisphosphate + ATP = 5-phospho-alpha-D-ribose 1-diphosphate + ADP</text>
        <dbReference type="Rhea" id="RHEA:20109"/>
        <dbReference type="ChEBI" id="CHEBI:30616"/>
        <dbReference type="ChEBI" id="CHEBI:58017"/>
        <dbReference type="ChEBI" id="CHEBI:68688"/>
        <dbReference type="ChEBI" id="CHEBI:456216"/>
        <dbReference type="EC" id="2.7.4.23"/>
    </reaction>
</comment>
<comment type="pathway">
    <text evidence="1">Metabolic intermediate biosynthesis; 5-phospho-alpha-D-ribose 1-diphosphate biosynthesis; 5-phospho-alpha-D-ribose 1-diphosphate from D-ribose 5-phosphate (route II): step 3/3.</text>
</comment>
<comment type="similarity">
    <text evidence="1">Belongs to the ribose 1,5-bisphosphokinase family.</text>
</comment>
<feature type="chain" id="PRO_0000412773" description="Ribose 1,5-bisphosphate phosphokinase PhnN">
    <location>
        <begin position="1"/>
        <end position="198"/>
    </location>
</feature>
<feature type="binding site" evidence="1">
    <location>
        <begin position="25"/>
        <end position="32"/>
    </location>
    <ligand>
        <name>ATP</name>
        <dbReference type="ChEBI" id="CHEBI:30616"/>
    </ligand>
</feature>
<dbReference type="EC" id="2.7.4.23" evidence="1"/>
<dbReference type="EMBL" id="BA000040">
    <property type="protein sequence ID" value="BAC46493.1"/>
    <property type="molecule type" value="Genomic_DNA"/>
</dbReference>
<dbReference type="RefSeq" id="NP_767868.1">
    <property type="nucleotide sequence ID" value="NC_004463.1"/>
</dbReference>
<dbReference type="RefSeq" id="WP_011084046.1">
    <property type="nucleotide sequence ID" value="NC_004463.1"/>
</dbReference>
<dbReference type="SMR" id="Q89V30"/>
<dbReference type="FunCoup" id="Q89V30">
    <property type="interactions" value="161"/>
</dbReference>
<dbReference type="STRING" id="224911.AAV28_03025"/>
<dbReference type="EnsemblBacteria" id="BAC46493">
    <property type="protein sequence ID" value="BAC46493"/>
    <property type="gene ID" value="BAC46493"/>
</dbReference>
<dbReference type="GeneID" id="46488500"/>
<dbReference type="KEGG" id="bja:blr1228"/>
<dbReference type="PATRIC" id="fig|224911.44.peg.633"/>
<dbReference type="eggNOG" id="COG3709">
    <property type="taxonomic scope" value="Bacteria"/>
</dbReference>
<dbReference type="HOGENOM" id="CLU_102477_0_0_5"/>
<dbReference type="InParanoid" id="Q89V30"/>
<dbReference type="OrthoDB" id="341217at2"/>
<dbReference type="PhylomeDB" id="Q89V30"/>
<dbReference type="UniPathway" id="UPA00087">
    <property type="reaction ID" value="UER00175"/>
</dbReference>
<dbReference type="Proteomes" id="UP000002526">
    <property type="component" value="Chromosome"/>
</dbReference>
<dbReference type="GO" id="GO:0005829">
    <property type="term" value="C:cytosol"/>
    <property type="evidence" value="ECO:0000318"/>
    <property type="project" value="GO_Central"/>
</dbReference>
<dbReference type="GO" id="GO:0005524">
    <property type="term" value="F:ATP binding"/>
    <property type="evidence" value="ECO:0007669"/>
    <property type="project" value="UniProtKB-KW"/>
</dbReference>
<dbReference type="GO" id="GO:0033863">
    <property type="term" value="F:ribose 1,5-bisphosphate phosphokinase activity"/>
    <property type="evidence" value="ECO:0000318"/>
    <property type="project" value="GO_Central"/>
</dbReference>
<dbReference type="GO" id="GO:0006015">
    <property type="term" value="P:5-phosphoribose 1-diphosphate biosynthetic process"/>
    <property type="evidence" value="ECO:0000318"/>
    <property type="project" value="GO_Central"/>
</dbReference>
<dbReference type="GO" id="GO:0019634">
    <property type="term" value="P:organic phosphonate metabolic process"/>
    <property type="evidence" value="ECO:0007669"/>
    <property type="project" value="UniProtKB-UniRule"/>
</dbReference>
<dbReference type="FunFam" id="3.40.50.300:FF:004409">
    <property type="entry name" value="Ribose 1,5-bisphosphate phosphokinase PhnN"/>
    <property type="match status" value="1"/>
</dbReference>
<dbReference type="Gene3D" id="3.40.50.300">
    <property type="entry name" value="P-loop containing nucleotide triphosphate hydrolases"/>
    <property type="match status" value="1"/>
</dbReference>
<dbReference type="HAMAP" id="MF_00836">
    <property type="entry name" value="PhnN"/>
    <property type="match status" value="1"/>
</dbReference>
<dbReference type="InterPro" id="IPR008145">
    <property type="entry name" value="GK/Ca_channel_bsu"/>
</dbReference>
<dbReference type="InterPro" id="IPR008144">
    <property type="entry name" value="Guanylate_kin-like_dom"/>
</dbReference>
<dbReference type="InterPro" id="IPR027417">
    <property type="entry name" value="P-loop_NTPase"/>
</dbReference>
<dbReference type="InterPro" id="IPR012699">
    <property type="entry name" value="PhnN"/>
</dbReference>
<dbReference type="NCBIfam" id="TIGR02322">
    <property type="entry name" value="phosphon_PhnN"/>
    <property type="match status" value="1"/>
</dbReference>
<dbReference type="PANTHER" id="PTHR23117">
    <property type="entry name" value="GUANYLATE KINASE-RELATED"/>
    <property type="match status" value="1"/>
</dbReference>
<dbReference type="PANTHER" id="PTHR23117:SF8">
    <property type="entry name" value="RIBOSE 1,5-BISPHOSPHATE PHOSPHOKINASE PHNN"/>
    <property type="match status" value="1"/>
</dbReference>
<dbReference type="Pfam" id="PF00625">
    <property type="entry name" value="Guanylate_kin"/>
    <property type="match status" value="1"/>
</dbReference>
<dbReference type="SMART" id="SM00072">
    <property type="entry name" value="GuKc"/>
    <property type="match status" value="1"/>
</dbReference>
<dbReference type="SUPFAM" id="SSF52540">
    <property type="entry name" value="P-loop containing nucleoside triphosphate hydrolases"/>
    <property type="match status" value="1"/>
</dbReference>
<dbReference type="PROSITE" id="PS50052">
    <property type="entry name" value="GUANYLATE_KINASE_2"/>
    <property type="match status" value="1"/>
</dbReference>
<organism>
    <name type="scientific">Bradyrhizobium diazoefficiens (strain JCM 10833 / BCRC 13528 / IAM 13628 / NBRC 14792 / USDA 110)</name>
    <dbReference type="NCBI Taxonomy" id="224911"/>
    <lineage>
        <taxon>Bacteria</taxon>
        <taxon>Pseudomonadati</taxon>
        <taxon>Pseudomonadota</taxon>
        <taxon>Alphaproteobacteria</taxon>
        <taxon>Hyphomicrobiales</taxon>
        <taxon>Nitrobacteraceae</taxon>
        <taxon>Bradyrhizobium</taxon>
    </lineage>
</organism>
<protein>
    <recommendedName>
        <fullName evidence="1">Ribose 1,5-bisphosphate phosphokinase PhnN</fullName>
        <ecNumber evidence="1">2.7.4.23</ecNumber>
    </recommendedName>
    <alternativeName>
        <fullName evidence="1">Ribose 1,5-bisphosphokinase</fullName>
    </alternativeName>
</protein>
<proteinExistence type="inferred from homology"/>
<accession>Q89V30</accession>
<keyword id="KW-0067">ATP-binding</keyword>
<keyword id="KW-0547">Nucleotide-binding</keyword>
<keyword id="KW-1185">Reference proteome</keyword>
<keyword id="KW-0808">Transferase</keyword>
<sequence>MSEIATMAQGEAGAIGPGRLVLVVGPSGAGKDTLLQLAQAACIDDHDVVFPRRVVTRESSAAEDNIAMSPDEFRRGIDHGDFAVHWDAHGHSYALPLEINDDIRAGRAVVVNVSRTVIAALRQAYANVVVVAITAPPDVLAQRLAARARHSDGNIAERLSRSVEDASAQADVTILNAGSADYHSRQLVRVIRNESWRE</sequence>
<reference key="1">
    <citation type="journal article" date="2002" name="DNA Res.">
        <title>Complete genomic sequence of nitrogen-fixing symbiotic bacterium Bradyrhizobium japonicum USDA110.</title>
        <authorList>
            <person name="Kaneko T."/>
            <person name="Nakamura Y."/>
            <person name="Sato S."/>
            <person name="Minamisawa K."/>
            <person name="Uchiumi T."/>
            <person name="Sasamoto S."/>
            <person name="Watanabe A."/>
            <person name="Idesawa K."/>
            <person name="Iriguchi M."/>
            <person name="Kawashima K."/>
            <person name="Kohara M."/>
            <person name="Matsumoto M."/>
            <person name="Shimpo S."/>
            <person name="Tsuruoka H."/>
            <person name="Wada T."/>
            <person name="Yamada M."/>
            <person name="Tabata S."/>
        </authorList>
    </citation>
    <scope>NUCLEOTIDE SEQUENCE [LARGE SCALE GENOMIC DNA]</scope>
    <source>
        <strain>JCM 10833 / BCRC 13528 / IAM 13628 / NBRC 14792 / USDA 110</strain>
    </source>
</reference>